<reference key="1">
    <citation type="journal article" date="1997" name="Nature">
        <title>The complete genome sequence of the hyperthermophilic, sulphate-reducing archaeon Archaeoglobus fulgidus.</title>
        <authorList>
            <person name="Klenk H.-P."/>
            <person name="Clayton R.A."/>
            <person name="Tomb J.-F."/>
            <person name="White O."/>
            <person name="Nelson K.E."/>
            <person name="Ketchum K.A."/>
            <person name="Dodson R.J."/>
            <person name="Gwinn M.L."/>
            <person name="Hickey E.K."/>
            <person name="Peterson J.D."/>
            <person name="Richardson D.L."/>
            <person name="Kerlavage A.R."/>
            <person name="Graham D.E."/>
            <person name="Kyrpides N.C."/>
            <person name="Fleischmann R.D."/>
            <person name="Quackenbush J."/>
            <person name="Lee N.H."/>
            <person name="Sutton G.G."/>
            <person name="Gill S.R."/>
            <person name="Kirkness E.F."/>
            <person name="Dougherty B.A."/>
            <person name="McKenney K."/>
            <person name="Adams M.D."/>
            <person name="Loftus B.J."/>
            <person name="Peterson S.N."/>
            <person name="Reich C.I."/>
            <person name="McNeil L.K."/>
            <person name="Badger J.H."/>
            <person name="Glodek A."/>
            <person name="Zhou L."/>
            <person name="Overbeek R."/>
            <person name="Gocayne J.D."/>
            <person name="Weidman J.F."/>
            <person name="McDonald L.A."/>
            <person name="Utterback T.R."/>
            <person name="Cotton M.D."/>
            <person name="Spriggs T."/>
            <person name="Artiach P."/>
            <person name="Kaine B.P."/>
            <person name="Sykes S.M."/>
            <person name="Sadow P.W."/>
            <person name="D'Andrea K.P."/>
            <person name="Bowman C."/>
            <person name="Fujii C."/>
            <person name="Garland S.A."/>
            <person name="Mason T.M."/>
            <person name="Olsen G.J."/>
            <person name="Fraser C.M."/>
            <person name="Smith H.O."/>
            <person name="Woese C.R."/>
            <person name="Venter J.C."/>
        </authorList>
    </citation>
    <scope>NUCLEOTIDE SEQUENCE [LARGE SCALE GENOMIC DNA]</scope>
    <source>
        <strain>ATCC 49558 / DSM 4304 / JCM 9628 / NBRC 100126 / VC-16</strain>
    </source>
</reference>
<proteinExistence type="predicted"/>
<accession>O29913</accession>
<gene>
    <name type="ordered locus">AF_0334</name>
</gene>
<name>Y334_ARCFU</name>
<protein>
    <recommendedName>
        <fullName>Uncharacterized protein AF_0334</fullName>
    </recommendedName>
</protein>
<sequence length="81" mass="9226">MKVGVKYCGGCNPEYRREDVEDVLRKHFTIFYSEDADVLVLINGCKKACLLEEVNHPKVVSVDSPVSEEELLRRVLKAMRG</sequence>
<organism>
    <name type="scientific">Archaeoglobus fulgidus (strain ATCC 49558 / DSM 4304 / JCM 9628 / NBRC 100126 / VC-16)</name>
    <dbReference type="NCBI Taxonomy" id="224325"/>
    <lineage>
        <taxon>Archaea</taxon>
        <taxon>Methanobacteriati</taxon>
        <taxon>Methanobacteriota</taxon>
        <taxon>Archaeoglobi</taxon>
        <taxon>Archaeoglobales</taxon>
        <taxon>Archaeoglobaceae</taxon>
        <taxon>Archaeoglobus</taxon>
    </lineage>
</organism>
<keyword id="KW-1185">Reference proteome</keyword>
<feature type="chain" id="PRO_0000127866" description="Uncharacterized protein AF_0334">
    <location>
        <begin position="1"/>
        <end position="81"/>
    </location>
</feature>
<dbReference type="EMBL" id="AE000782">
    <property type="protein sequence ID" value="AAB90904.1"/>
    <property type="molecule type" value="Genomic_DNA"/>
</dbReference>
<dbReference type="PIR" id="F69291">
    <property type="entry name" value="F69291"/>
</dbReference>
<dbReference type="RefSeq" id="WP_010877841.1">
    <property type="nucleotide sequence ID" value="NC_000917.1"/>
</dbReference>
<dbReference type="STRING" id="224325.AF_0334"/>
<dbReference type="PaxDb" id="224325-AF_0334"/>
<dbReference type="EnsemblBacteria" id="AAB90904">
    <property type="protein sequence ID" value="AAB90904"/>
    <property type="gene ID" value="AF_0334"/>
</dbReference>
<dbReference type="KEGG" id="afu:AF_0334"/>
<dbReference type="HOGENOM" id="CLU_2601017_0_0_2"/>
<dbReference type="Proteomes" id="UP000002199">
    <property type="component" value="Chromosome"/>
</dbReference>